<proteinExistence type="inferred from homology"/>
<reference key="1">
    <citation type="journal article" date="2004" name="Proc. Natl. Acad. Sci. U.S.A.">
        <title>Genome sequence of the enterobacterial phytopathogen Erwinia carotovora subsp. atroseptica and characterization of virulence factors.</title>
        <authorList>
            <person name="Bell K.S."/>
            <person name="Sebaihia M."/>
            <person name="Pritchard L."/>
            <person name="Holden M.T.G."/>
            <person name="Hyman L.J."/>
            <person name="Holeva M.C."/>
            <person name="Thomson N.R."/>
            <person name="Bentley S.D."/>
            <person name="Churcher L.J.C."/>
            <person name="Mungall K."/>
            <person name="Atkin R."/>
            <person name="Bason N."/>
            <person name="Brooks K."/>
            <person name="Chillingworth T."/>
            <person name="Clark K."/>
            <person name="Doggett J."/>
            <person name="Fraser A."/>
            <person name="Hance Z."/>
            <person name="Hauser H."/>
            <person name="Jagels K."/>
            <person name="Moule S."/>
            <person name="Norbertczak H."/>
            <person name="Ormond D."/>
            <person name="Price C."/>
            <person name="Quail M.A."/>
            <person name="Sanders M."/>
            <person name="Walker D."/>
            <person name="Whitehead S."/>
            <person name="Salmond G.P.C."/>
            <person name="Birch P.R.J."/>
            <person name="Parkhill J."/>
            <person name="Toth I.K."/>
        </authorList>
    </citation>
    <scope>NUCLEOTIDE SEQUENCE [LARGE SCALE GENOMIC DNA]</scope>
    <source>
        <strain>SCRI 1043 / ATCC BAA-672</strain>
    </source>
</reference>
<feature type="chain" id="PRO_0000298356" description="Disulfide bond formation protein B">
    <location>
        <begin position="1"/>
        <end position="176"/>
    </location>
</feature>
<feature type="topological domain" description="Cytoplasmic" evidence="1">
    <location>
        <begin position="1"/>
        <end position="14"/>
    </location>
</feature>
<feature type="transmembrane region" description="Helical" evidence="1">
    <location>
        <begin position="15"/>
        <end position="31"/>
    </location>
</feature>
<feature type="topological domain" description="Periplasmic" evidence="1">
    <location>
        <begin position="32"/>
        <end position="49"/>
    </location>
</feature>
<feature type="transmembrane region" description="Helical" evidence="1">
    <location>
        <begin position="50"/>
        <end position="65"/>
    </location>
</feature>
<feature type="topological domain" description="Cytoplasmic" evidence="1">
    <location>
        <begin position="66"/>
        <end position="71"/>
    </location>
</feature>
<feature type="transmembrane region" description="Helical" evidence="1">
    <location>
        <begin position="72"/>
        <end position="89"/>
    </location>
</feature>
<feature type="topological domain" description="Periplasmic" evidence="1">
    <location>
        <begin position="90"/>
        <end position="144"/>
    </location>
</feature>
<feature type="transmembrane region" description="Helical" evidence="1">
    <location>
        <begin position="145"/>
        <end position="163"/>
    </location>
</feature>
<feature type="topological domain" description="Cytoplasmic" evidence="1">
    <location>
        <begin position="164"/>
        <end position="176"/>
    </location>
</feature>
<feature type="disulfide bond" description="Redox-active" evidence="1">
    <location>
        <begin position="41"/>
        <end position="44"/>
    </location>
</feature>
<feature type="disulfide bond" description="Redox-active" evidence="1">
    <location>
        <begin position="104"/>
        <end position="130"/>
    </location>
</feature>
<comment type="function">
    <text evidence="1">Required for disulfide bond formation in some periplasmic proteins. Acts by oxidizing the DsbA protein.</text>
</comment>
<comment type="subcellular location">
    <subcellularLocation>
        <location evidence="1">Cell inner membrane</location>
        <topology evidence="1">Multi-pass membrane protein</topology>
    </subcellularLocation>
</comment>
<comment type="similarity">
    <text evidence="1">Belongs to the DsbB family.</text>
</comment>
<accession>Q6D4M8</accession>
<dbReference type="EMBL" id="BX950851">
    <property type="protein sequence ID" value="CAG75265.1"/>
    <property type="molecule type" value="Genomic_DNA"/>
</dbReference>
<dbReference type="RefSeq" id="WP_011093919.1">
    <property type="nucleotide sequence ID" value="NC_004547.2"/>
</dbReference>
<dbReference type="SMR" id="Q6D4M8"/>
<dbReference type="STRING" id="218491.ECA2362"/>
<dbReference type="KEGG" id="eca:ECA2362"/>
<dbReference type="PATRIC" id="fig|218491.5.peg.2387"/>
<dbReference type="eggNOG" id="COG1495">
    <property type="taxonomic scope" value="Bacteria"/>
</dbReference>
<dbReference type="HOGENOM" id="CLU_098660_2_0_6"/>
<dbReference type="OrthoDB" id="3711263at2"/>
<dbReference type="Proteomes" id="UP000007966">
    <property type="component" value="Chromosome"/>
</dbReference>
<dbReference type="GO" id="GO:0005886">
    <property type="term" value="C:plasma membrane"/>
    <property type="evidence" value="ECO:0007669"/>
    <property type="project" value="UniProtKB-SubCell"/>
</dbReference>
<dbReference type="GO" id="GO:0009055">
    <property type="term" value="F:electron transfer activity"/>
    <property type="evidence" value="ECO:0007669"/>
    <property type="project" value="UniProtKB-UniRule"/>
</dbReference>
<dbReference type="GO" id="GO:0015035">
    <property type="term" value="F:protein-disulfide reductase activity"/>
    <property type="evidence" value="ECO:0007669"/>
    <property type="project" value="UniProtKB-UniRule"/>
</dbReference>
<dbReference type="GO" id="GO:0006457">
    <property type="term" value="P:protein folding"/>
    <property type="evidence" value="ECO:0007669"/>
    <property type="project" value="InterPro"/>
</dbReference>
<dbReference type="FunFam" id="1.20.1550.10:FF:000001">
    <property type="entry name" value="Disulfide bond formation protein B"/>
    <property type="match status" value="1"/>
</dbReference>
<dbReference type="Gene3D" id="1.20.1550.10">
    <property type="entry name" value="DsbB-like"/>
    <property type="match status" value="1"/>
</dbReference>
<dbReference type="HAMAP" id="MF_00286">
    <property type="entry name" value="DsbB"/>
    <property type="match status" value="1"/>
</dbReference>
<dbReference type="InterPro" id="IPR003752">
    <property type="entry name" value="DiS_bond_form_DsbB/BdbC"/>
</dbReference>
<dbReference type="InterPro" id="IPR022920">
    <property type="entry name" value="Disulphide_bond_form_DsbB"/>
</dbReference>
<dbReference type="InterPro" id="IPR050183">
    <property type="entry name" value="DsbB"/>
</dbReference>
<dbReference type="InterPro" id="IPR023380">
    <property type="entry name" value="DsbB-like_sf"/>
</dbReference>
<dbReference type="NCBIfam" id="NF002485">
    <property type="entry name" value="PRK01749.1"/>
    <property type="match status" value="1"/>
</dbReference>
<dbReference type="PANTHER" id="PTHR36570">
    <property type="entry name" value="DISULFIDE BOND FORMATION PROTEIN B"/>
    <property type="match status" value="1"/>
</dbReference>
<dbReference type="PANTHER" id="PTHR36570:SF2">
    <property type="entry name" value="DISULFIDE BOND FORMATION PROTEIN B"/>
    <property type="match status" value="1"/>
</dbReference>
<dbReference type="Pfam" id="PF02600">
    <property type="entry name" value="DsbB"/>
    <property type="match status" value="1"/>
</dbReference>
<dbReference type="SUPFAM" id="SSF158442">
    <property type="entry name" value="DsbB-like"/>
    <property type="match status" value="1"/>
</dbReference>
<gene>
    <name evidence="1" type="primary">dsbB</name>
    <name type="ordered locus">ECA2362</name>
</gene>
<sequence length="176" mass="20114">MLRFLNRCSRGRGAWLLLAFTALALELTALYFQHVMLLKPCVLCIYQRSALWGVFAAGIVGAIAPSSLLRYPAIALWIYSSYEGIRLAWKHTDILLNPSPFTTCDFFVSFPSWLPLDKWLPAIFNATGDCSERQWSFLSMEMPQWLLGIFAAYLLIAVLVLIAQPFRSKRRDLFSR</sequence>
<organism>
    <name type="scientific">Pectobacterium atrosepticum (strain SCRI 1043 / ATCC BAA-672)</name>
    <name type="common">Erwinia carotovora subsp. atroseptica</name>
    <dbReference type="NCBI Taxonomy" id="218491"/>
    <lineage>
        <taxon>Bacteria</taxon>
        <taxon>Pseudomonadati</taxon>
        <taxon>Pseudomonadota</taxon>
        <taxon>Gammaproteobacteria</taxon>
        <taxon>Enterobacterales</taxon>
        <taxon>Pectobacteriaceae</taxon>
        <taxon>Pectobacterium</taxon>
    </lineage>
</organism>
<name>DSBB_PECAS</name>
<evidence type="ECO:0000255" key="1">
    <source>
        <dbReference type="HAMAP-Rule" id="MF_00286"/>
    </source>
</evidence>
<protein>
    <recommendedName>
        <fullName evidence="1">Disulfide bond formation protein B</fullName>
    </recommendedName>
    <alternativeName>
        <fullName evidence="1">Disulfide oxidoreductase</fullName>
    </alternativeName>
</protein>
<keyword id="KW-0997">Cell inner membrane</keyword>
<keyword id="KW-1003">Cell membrane</keyword>
<keyword id="KW-0143">Chaperone</keyword>
<keyword id="KW-1015">Disulfide bond</keyword>
<keyword id="KW-0249">Electron transport</keyword>
<keyword id="KW-0472">Membrane</keyword>
<keyword id="KW-0560">Oxidoreductase</keyword>
<keyword id="KW-0676">Redox-active center</keyword>
<keyword id="KW-1185">Reference proteome</keyword>
<keyword id="KW-0812">Transmembrane</keyword>
<keyword id="KW-1133">Transmembrane helix</keyword>
<keyword id="KW-0813">Transport</keyword>